<keyword id="KW-0378">Hydrolase</keyword>
<protein>
    <recommendedName>
        <fullName evidence="1">Guanosine-5'-triphosphate,3'-diphosphate pyrophosphatase</fullName>
        <ecNumber evidence="1">3.6.1.40</ecNumber>
    </recommendedName>
    <alternativeName>
        <fullName evidence="1">Guanosine pentaphosphate phosphohydrolase</fullName>
    </alternativeName>
    <alternativeName>
        <fullName evidence="1">pppGpp-5'-phosphohydrolase</fullName>
    </alternativeName>
</protein>
<sequence>MMLSSTSLYAAIDLGSNSFHMLVVREVAGSIQTLARIKRKVRLAAGLDNQNHLSQEAMERGWQCLKLFSERLQDIPLDQIRVVATATLRLASNADEFLRTATEILGCPIQVISGEEEARLIYHGVAHTTGGPEQRLVVDIGGGSTELVTGNGAQANILVSLSMGCVTWLERYFGDRHLAKENFERAELAAHEMIKPVAQRFREHGWQVCVGASGTVQALQEIMVAQGMDELITLAKLQQLKQRAIQCGKLEELEIPGLTLERALVFPSGLSILIAIFQELSIESMTLAGGALREGLVYGMLHLPVEQDIRRRTLRNLQRRYLLDTEQAKRVSCLADNFFLQVEKEWHLDGRCREFLQNACLIHEIGLSVDFKHAPQHAAYLIRNLDLPGFTPAQKLLLSALLQNQSDTIDLSLLNQQNALPADMAQHLCRLLRLAIIFSSRRRDDTLPAVRLRADNNALYVLVPQGWLEQHPYRAEALEQESHWQSYVQWPLLLEELS</sequence>
<accession>Q66G20</accession>
<proteinExistence type="inferred from homology"/>
<comment type="function">
    <text evidence="1">Catalyzes the conversion of pppGpp to ppGpp. Guanosine pentaphosphate (pppGpp) is a cytoplasmic signaling molecule which together with ppGpp controls the 'stringent response', an adaptive process that allows bacteria to respond to amino acid starvation, resulting in the coordinated regulation of numerous cellular activities.</text>
</comment>
<comment type="catalytic activity">
    <reaction evidence="1">
        <text>guanosine 3'-diphosphate 5'-triphosphate + H2O = guanosine 3',5'-bis(diphosphate) + phosphate + H(+)</text>
        <dbReference type="Rhea" id="RHEA:13073"/>
        <dbReference type="ChEBI" id="CHEBI:15377"/>
        <dbReference type="ChEBI" id="CHEBI:15378"/>
        <dbReference type="ChEBI" id="CHEBI:43474"/>
        <dbReference type="ChEBI" id="CHEBI:77828"/>
        <dbReference type="ChEBI" id="CHEBI:142410"/>
        <dbReference type="EC" id="3.6.1.40"/>
    </reaction>
</comment>
<comment type="pathway">
    <text evidence="1">Purine metabolism; ppGpp biosynthesis; ppGpp from GTP: step 2/2.</text>
</comment>
<comment type="similarity">
    <text evidence="1">Belongs to the GppA/Ppx family. GppA subfamily.</text>
</comment>
<dbReference type="EC" id="3.6.1.40" evidence="1"/>
<dbReference type="EMBL" id="BX936398">
    <property type="protein sequence ID" value="CAH19404.1"/>
    <property type="molecule type" value="Genomic_DNA"/>
</dbReference>
<dbReference type="SMR" id="Q66G20"/>
<dbReference type="KEGG" id="yps:YPTB0164"/>
<dbReference type="UniPathway" id="UPA00908">
    <property type="reaction ID" value="UER00885"/>
</dbReference>
<dbReference type="Proteomes" id="UP000001011">
    <property type="component" value="Chromosome"/>
</dbReference>
<dbReference type="GO" id="GO:0004309">
    <property type="term" value="F:exopolyphosphatase activity"/>
    <property type="evidence" value="ECO:0007669"/>
    <property type="project" value="InterPro"/>
</dbReference>
<dbReference type="GO" id="GO:0008894">
    <property type="term" value="F:guanosine-5'-triphosphate,3'-diphosphate diphosphatase activity"/>
    <property type="evidence" value="ECO:0007669"/>
    <property type="project" value="UniProtKB-UniRule"/>
</dbReference>
<dbReference type="GO" id="GO:0015974">
    <property type="term" value="P:guanosine pentaphosphate catabolic process"/>
    <property type="evidence" value="ECO:0007669"/>
    <property type="project" value="InterPro"/>
</dbReference>
<dbReference type="GO" id="GO:0015970">
    <property type="term" value="P:guanosine tetraphosphate biosynthetic process"/>
    <property type="evidence" value="ECO:0007669"/>
    <property type="project" value="UniProtKB-UniRule"/>
</dbReference>
<dbReference type="GO" id="GO:0015949">
    <property type="term" value="P:nucleobase-containing small molecule interconversion"/>
    <property type="evidence" value="ECO:0007669"/>
    <property type="project" value="TreeGrafter"/>
</dbReference>
<dbReference type="CDD" id="cd24117">
    <property type="entry name" value="ASKHA_NBD_EcGppA-like"/>
    <property type="match status" value="1"/>
</dbReference>
<dbReference type="FunFam" id="1.10.3210.10:FF:000004">
    <property type="entry name" value="Guanosine-5'-triphosphate,3'-diphosphate pyrophosphatase"/>
    <property type="match status" value="1"/>
</dbReference>
<dbReference type="FunFam" id="3.30.420.150:FF:000001">
    <property type="entry name" value="Guanosine-5'-triphosphate,3'-diphosphate pyrophosphatase"/>
    <property type="match status" value="1"/>
</dbReference>
<dbReference type="FunFam" id="3.30.420.40:FF:000023">
    <property type="entry name" value="Guanosine-5'-triphosphate,3'-diphosphate pyrophosphatase"/>
    <property type="match status" value="1"/>
</dbReference>
<dbReference type="Gene3D" id="3.30.420.40">
    <property type="match status" value="1"/>
</dbReference>
<dbReference type="Gene3D" id="3.30.420.150">
    <property type="entry name" value="Exopolyphosphatase. Domain 2"/>
    <property type="match status" value="1"/>
</dbReference>
<dbReference type="Gene3D" id="1.10.3210.10">
    <property type="entry name" value="Hypothetical protein af1432"/>
    <property type="match status" value="1"/>
</dbReference>
<dbReference type="HAMAP" id="MF_01550">
    <property type="entry name" value="GppA"/>
    <property type="match status" value="1"/>
</dbReference>
<dbReference type="InterPro" id="IPR043129">
    <property type="entry name" value="ATPase_NBD"/>
</dbReference>
<dbReference type="InterPro" id="IPR022371">
    <property type="entry name" value="Exopolyphosphatase"/>
</dbReference>
<dbReference type="InterPro" id="IPR050273">
    <property type="entry name" value="GppA/Ppx_hydrolase"/>
</dbReference>
<dbReference type="InterPro" id="IPR023709">
    <property type="entry name" value="Guo-5TP_3DP_PyrP"/>
</dbReference>
<dbReference type="InterPro" id="IPR048950">
    <property type="entry name" value="Ppx_GppA_C"/>
</dbReference>
<dbReference type="InterPro" id="IPR003695">
    <property type="entry name" value="Ppx_GppA_N"/>
</dbReference>
<dbReference type="InterPro" id="IPR030673">
    <property type="entry name" value="PyroPPase_GppA_Ppx"/>
</dbReference>
<dbReference type="NCBIfam" id="TIGR03706">
    <property type="entry name" value="exo_poly_only"/>
    <property type="match status" value="1"/>
</dbReference>
<dbReference type="NCBIfam" id="NF008260">
    <property type="entry name" value="PRK11031.1"/>
    <property type="match status" value="1"/>
</dbReference>
<dbReference type="PANTHER" id="PTHR30005">
    <property type="entry name" value="EXOPOLYPHOSPHATASE"/>
    <property type="match status" value="1"/>
</dbReference>
<dbReference type="PANTHER" id="PTHR30005:SF0">
    <property type="entry name" value="RETROGRADE REGULATION PROTEIN 2"/>
    <property type="match status" value="1"/>
</dbReference>
<dbReference type="Pfam" id="PF02541">
    <property type="entry name" value="Ppx-GppA"/>
    <property type="match status" value="1"/>
</dbReference>
<dbReference type="Pfam" id="PF21447">
    <property type="entry name" value="Ppx-GppA_III"/>
    <property type="match status" value="1"/>
</dbReference>
<dbReference type="PIRSF" id="PIRSF001267">
    <property type="entry name" value="Pyrophosphatase_GppA_Ppx"/>
    <property type="match status" value="1"/>
</dbReference>
<dbReference type="SUPFAM" id="SSF53067">
    <property type="entry name" value="Actin-like ATPase domain"/>
    <property type="match status" value="2"/>
</dbReference>
<dbReference type="SUPFAM" id="SSF109604">
    <property type="entry name" value="HD-domain/PDEase-like"/>
    <property type="match status" value="1"/>
</dbReference>
<feature type="chain" id="PRO_0000194298" description="Guanosine-5'-triphosphate,3'-diphosphate pyrophosphatase">
    <location>
        <begin position="1"/>
        <end position="498"/>
    </location>
</feature>
<evidence type="ECO:0000255" key="1">
    <source>
        <dbReference type="HAMAP-Rule" id="MF_01550"/>
    </source>
</evidence>
<reference key="1">
    <citation type="journal article" date="2004" name="Proc. Natl. Acad. Sci. U.S.A.">
        <title>Insights into the evolution of Yersinia pestis through whole-genome comparison with Yersinia pseudotuberculosis.</title>
        <authorList>
            <person name="Chain P.S.G."/>
            <person name="Carniel E."/>
            <person name="Larimer F.W."/>
            <person name="Lamerdin J."/>
            <person name="Stoutland P.O."/>
            <person name="Regala W.M."/>
            <person name="Georgescu A.M."/>
            <person name="Vergez L.M."/>
            <person name="Land M.L."/>
            <person name="Motin V.L."/>
            <person name="Brubaker R.R."/>
            <person name="Fowler J."/>
            <person name="Hinnebusch J."/>
            <person name="Marceau M."/>
            <person name="Medigue C."/>
            <person name="Simonet M."/>
            <person name="Chenal-Francisque V."/>
            <person name="Souza B."/>
            <person name="Dacheux D."/>
            <person name="Elliott J.M."/>
            <person name="Derbise A."/>
            <person name="Hauser L.J."/>
            <person name="Garcia E."/>
        </authorList>
    </citation>
    <scope>NUCLEOTIDE SEQUENCE [LARGE SCALE GENOMIC DNA]</scope>
    <source>
        <strain>IP32953</strain>
    </source>
</reference>
<organism>
    <name type="scientific">Yersinia pseudotuberculosis serotype I (strain IP32953)</name>
    <dbReference type="NCBI Taxonomy" id="273123"/>
    <lineage>
        <taxon>Bacteria</taxon>
        <taxon>Pseudomonadati</taxon>
        <taxon>Pseudomonadota</taxon>
        <taxon>Gammaproteobacteria</taxon>
        <taxon>Enterobacterales</taxon>
        <taxon>Yersiniaceae</taxon>
        <taxon>Yersinia</taxon>
    </lineage>
</organism>
<name>GPPA_YERPS</name>
<gene>
    <name evidence="1" type="primary">gppA</name>
    <name type="ordered locus">YPTB0164</name>
</gene>